<organism>
    <name type="scientific">Aspergillus oryzae (strain ATCC 42149 / RIB 40)</name>
    <name type="common">Yellow koji mold</name>
    <dbReference type="NCBI Taxonomy" id="510516"/>
    <lineage>
        <taxon>Eukaryota</taxon>
        <taxon>Fungi</taxon>
        <taxon>Dikarya</taxon>
        <taxon>Ascomycota</taxon>
        <taxon>Pezizomycotina</taxon>
        <taxon>Eurotiomycetes</taxon>
        <taxon>Eurotiomycetidae</taxon>
        <taxon>Eurotiales</taxon>
        <taxon>Aspergillaceae</taxon>
        <taxon>Aspergillus</taxon>
        <taxon>Aspergillus subgen. Circumdati</taxon>
    </lineage>
</organism>
<reference key="1">
    <citation type="journal article" date="2005" name="Nature">
        <title>Genome sequencing and analysis of Aspergillus oryzae.</title>
        <authorList>
            <person name="Machida M."/>
            <person name="Asai K."/>
            <person name="Sano M."/>
            <person name="Tanaka T."/>
            <person name="Kumagai T."/>
            <person name="Terai G."/>
            <person name="Kusumoto K."/>
            <person name="Arima T."/>
            <person name="Akita O."/>
            <person name="Kashiwagi Y."/>
            <person name="Abe K."/>
            <person name="Gomi K."/>
            <person name="Horiuchi H."/>
            <person name="Kitamoto K."/>
            <person name="Kobayashi T."/>
            <person name="Takeuchi M."/>
            <person name="Denning D.W."/>
            <person name="Galagan J.E."/>
            <person name="Nierman W.C."/>
            <person name="Yu J."/>
            <person name="Archer D.B."/>
            <person name="Bennett J.W."/>
            <person name="Bhatnagar D."/>
            <person name="Cleveland T.E."/>
            <person name="Fedorova N.D."/>
            <person name="Gotoh O."/>
            <person name="Horikawa H."/>
            <person name="Hosoyama A."/>
            <person name="Ichinomiya M."/>
            <person name="Igarashi R."/>
            <person name="Iwashita K."/>
            <person name="Juvvadi P.R."/>
            <person name="Kato M."/>
            <person name="Kato Y."/>
            <person name="Kin T."/>
            <person name="Kokubun A."/>
            <person name="Maeda H."/>
            <person name="Maeyama N."/>
            <person name="Maruyama J."/>
            <person name="Nagasaki H."/>
            <person name="Nakajima T."/>
            <person name="Oda K."/>
            <person name="Okada K."/>
            <person name="Paulsen I."/>
            <person name="Sakamoto K."/>
            <person name="Sawano T."/>
            <person name="Takahashi M."/>
            <person name="Takase K."/>
            <person name="Terabayashi Y."/>
            <person name="Wortman J.R."/>
            <person name="Yamada O."/>
            <person name="Yamagata Y."/>
            <person name="Anazawa H."/>
            <person name="Hata Y."/>
            <person name="Koide Y."/>
            <person name="Komori T."/>
            <person name="Koyama Y."/>
            <person name="Minetoki T."/>
            <person name="Suharnan S."/>
            <person name="Tanaka A."/>
            <person name="Isono K."/>
            <person name="Kuhara S."/>
            <person name="Ogasawara N."/>
            <person name="Kikuchi H."/>
        </authorList>
    </citation>
    <scope>NUCLEOTIDE SEQUENCE [LARGE SCALE GENOMIC DNA]</scope>
    <source>
        <strain>ATCC 42149 / RIB 40</strain>
    </source>
</reference>
<gene>
    <name type="primary">nte1</name>
    <name type="ORF">AO090012000173</name>
</gene>
<comment type="function">
    <text evidence="1">Intracellular phospholipase B that catalyzes the double deacylation of phosphatidylcholine (PC) to glycerophosphocholine (GroPCho). Plays an important role in membrane lipid homeostasis. Responsible for the rapid PC turnover in response to inositol, elevated temperatures, or when choline is present in the growth medium (By similarity).</text>
</comment>
<comment type="catalytic activity">
    <reaction>
        <text>a 1-acyl-sn-glycero-3-phosphocholine + H2O = sn-glycerol 3-phosphocholine + a fatty acid + H(+)</text>
        <dbReference type="Rhea" id="RHEA:15177"/>
        <dbReference type="ChEBI" id="CHEBI:15377"/>
        <dbReference type="ChEBI" id="CHEBI:15378"/>
        <dbReference type="ChEBI" id="CHEBI:16870"/>
        <dbReference type="ChEBI" id="CHEBI:28868"/>
        <dbReference type="ChEBI" id="CHEBI:58168"/>
        <dbReference type="EC" id="3.1.1.5"/>
    </reaction>
</comment>
<comment type="activity regulation">
    <text evidence="1">Inhibited by organophosphorus esters.</text>
</comment>
<comment type="subcellular location">
    <subcellularLocation>
        <location evidence="1">Endoplasmic reticulum membrane</location>
        <topology evidence="1">Multi-pass membrane protein</topology>
    </subcellularLocation>
</comment>
<comment type="similarity">
    <text evidence="5">Belongs to the NTE family.</text>
</comment>
<comment type="sequence caution" evidence="5">
    <conflict type="erroneous gene model prediction">
        <sequence resource="EMBL-CDS" id="BAE60393"/>
    </conflict>
</comment>
<protein>
    <recommendedName>
        <fullName>Lysophospholipase nte1</fullName>
        <ecNumber>3.1.1.5</ecNumber>
    </recommendedName>
    <alternativeName>
        <fullName>Intracellular phospholipase B</fullName>
    </alternativeName>
    <alternativeName>
        <fullName>Neuropathy target esterase homolog</fullName>
    </alternativeName>
</protein>
<evidence type="ECO:0000250" key="1"/>
<evidence type="ECO:0000255" key="2"/>
<evidence type="ECO:0000255" key="3">
    <source>
        <dbReference type="PROSITE-ProRule" id="PRU01161"/>
    </source>
</evidence>
<evidence type="ECO:0000256" key="4">
    <source>
        <dbReference type="SAM" id="MobiDB-lite"/>
    </source>
</evidence>
<evidence type="ECO:0000305" key="5"/>
<dbReference type="EC" id="3.1.1.5"/>
<dbReference type="EMBL" id="BA000052">
    <property type="protein sequence ID" value="BAE60393.1"/>
    <property type="status" value="ALT_SEQ"/>
    <property type="molecule type" value="Genomic_DNA"/>
</dbReference>
<dbReference type="SMR" id="Q2UDH2"/>
<dbReference type="STRING" id="510516.Q2UDH2"/>
<dbReference type="VEuPathDB" id="FungiDB:AO090012000173"/>
<dbReference type="Proteomes" id="UP000006564">
    <property type="component" value="Chromosome 4"/>
</dbReference>
<dbReference type="GO" id="GO:0005789">
    <property type="term" value="C:endoplasmic reticulum membrane"/>
    <property type="evidence" value="ECO:0007669"/>
    <property type="project" value="UniProtKB-SubCell"/>
</dbReference>
<dbReference type="GO" id="GO:0004622">
    <property type="term" value="F:lysophospholipase activity"/>
    <property type="evidence" value="ECO:0007669"/>
    <property type="project" value="UniProtKB-EC"/>
</dbReference>
<dbReference type="GO" id="GO:0034638">
    <property type="term" value="P:phosphatidylcholine catabolic process"/>
    <property type="evidence" value="ECO:0007669"/>
    <property type="project" value="EnsemblFungi"/>
</dbReference>
<dbReference type="GO" id="GO:0071071">
    <property type="term" value="P:regulation of phospholipid biosynthetic process"/>
    <property type="evidence" value="ECO:0007669"/>
    <property type="project" value="EnsemblFungi"/>
</dbReference>
<dbReference type="CDD" id="cd00038">
    <property type="entry name" value="CAP_ED"/>
    <property type="match status" value="2"/>
</dbReference>
<dbReference type="FunFam" id="2.60.120.10:FF:000062">
    <property type="entry name" value="Lysophospholipase NTE1"/>
    <property type="match status" value="1"/>
</dbReference>
<dbReference type="FunFam" id="3.40.1090.10:FF:000007">
    <property type="entry name" value="Lysophospholipase NTE1"/>
    <property type="match status" value="1"/>
</dbReference>
<dbReference type="FunFam" id="3.40.1090.10:FF:000018">
    <property type="entry name" value="Lysophospholipase NTE1"/>
    <property type="match status" value="1"/>
</dbReference>
<dbReference type="Gene3D" id="3.40.1090.10">
    <property type="entry name" value="Cytosolic phospholipase A2 catalytic domain"/>
    <property type="match status" value="2"/>
</dbReference>
<dbReference type="Gene3D" id="2.60.120.10">
    <property type="entry name" value="Jelly Rolls"/>
    <property type="match status" value="3"/>
</dbReference>
<dbReference type="InterPro" id="IPR016035">
    <property type="entry name" value="Acyl_Trfase/lysoPLipase"/>
</dbReference>
<dbReference type="InterPro" id="IPR000595">
    <property type="entry name" value="cNMP-bd_dom"/>
</dbReference>
<dbReference type="InterPro" id="IPR018490">
    <property type="entry name" value="cNMP-bd_dom_sf"/>
</dbReference>
<dbReference type="InterPro" id="IPR050301">
    <property type="entry name" value="NTE"/>
</dbReference>
<dbReference type="InterPro" id="IPR056556">
    <property type="entry name" value="NTE1_P-loop_dom"/>
</dbReference>
<dbReference type="InterPro" id="IPR002641">
    <property type="entry name" value="PNPLA_dom"/>
</dbReference>
<dbReference type="InterPro" id="IPR014710">
    <property type="entry name" value="RmlC-like_jellyroll"/>
</dbReference>
<dbReference type="PANTHER" id="PTHR14226:SF29">
    <property type="entry name" value="NEUROPATHY TARGET ESTERASE SWS"/>
    <property type="match status" value="1"/>
</dbReference>
<dbReference type="PANTHER" id="PTHR14226">
    <property type="entry name" value="NEUROPATHY TARGET ESTERASE/SWISS CHEESE D.MELANOGASTER"/>
    <property type="match status" value="1"/>
</dbReference>
<dbReference type="Pfam" id="PF00027">
    <property type="entry name" value="cNMP_binding"/>
    <property type="match status" value="1"/>
</dbReference>
<dbReference type="Pfam" id="PF24179">
    <property type="entry name" value="NTE_Ploop"/>
    <property type="match status" value="1"/>
</dbReference>
<dbReference type="Pfam" id="PF01734">
    <property type="entry name" value="Patatin"/>
    <property type="match status" value="1"/>
</dbReference>
<dbReference type="SMART" id="SM00100">
    <property type="entry name" value="cNMP"/>
    <property type="match status" value="1"/>
</dbReference>
<dbReference type="SUPFAM" id="SSF51206">
    <property type="entry name" value="cAMP-binding domain-like"/>
    <property type="match status" value="3"/>
</dbReference>
<dbReference type="SUPFAM" id="SSF52151">
    <property type="entry name" value="FabD/lysophospholipase-like"/>
    <property type="match status" value="1"/>
</dbReference>
<dbReference type="PROSITE" id="PS50042">
    <property type="entry name" value="CNMP_BINDING_3"/>
    <property type="match status" value="2"/>
</dbReference>
<dbReference type="PROSITE" id="PS51635">
    <property type="entry name" value="PNPLA"/>
    <property type="match status" value="1"/>
</dbReference>
<name>NTE1_ASPOR</name>
<feature type="chain" id="PRO_0000295312" description="Lysophospholipase nte1">
    <location>
        <begin position="1"/>
        <end position="1538"/>
    </location>
</feature>
<feature type="topological domain" description="Cytoplasmic" evidence="1">
    <location>
        <begin position="1"/>
        <end position="74"/>
    </location>
</feature>
<feature type="transmembrane region" description="Helical" evidence="2">
    <location>
        <begin position="75"/>
        <end position="95"/>
    </location>
</feature>
<feature type="topological domain" description="Lumenal" evidence="1">
    <location>
        <begin position="96"/>
        <end position="117"/>
    </location>
</feature>
<feature type="transmembrane region" description="Helical" evidence="2">
    <location>
        <begin position="118"/>
        <end position="138"/>
    </location>
</feature>
<feature type="topological domain" description="Cytoplasmic" evidence="1">
    <location>
        <begin position="139"/>
        <end position="1538"/>
    </location>
</feature>
<feature type="domain" description="PNPLA" evidence="3">
    <location>
        <begin position="1235"/>
        <end position="1399"/>
    </location>
</feature>
<feature type="region of interest" description="Disordered" evidence="4">
    <location>
        <begin position="242"/>
        <end position="264"/>
    </location>
</feature>
<feature type="region of interest" description="Disordered" evidence="4">
    <location>
        <begin position="302"/>
        <end position="393"/>
    </location>
</feature>
<feature type="region of interest" description="Disordered" evidence="4">
    <location>
        <begin position="529"/>
        <end position="559"/>
    </location>
</feature>
<feature type="region of interest" description="Disordered" evidence="4">
    <location>
        <begin position="1517"/>
        <end position="1538"/>
    </location>
</feature>
<feature type="short sequence motif" description="GXGXXG" evidence="3">
    <location>
        <begin position="1239"/>
        <end position="1244"/>
    </location>
</feature>
<feature type="short sequence motif" description="GXSXG" evidence="3">
    <location>
        <begin position="1266"/>
        <end position="1270"/>
    </location>
</feature>
<feature type="short sequence motif" description="DGA/G" evidence="3">
    <location>
        <begin position="1386"/>
        <end position="1388"/>
    </location>
</feature>
<feature type="compositionally biased region" description="Low complexity" evidence="4">
    <location>
        <begin position="302"/>
        <end position="314"/>
    </location>
</feature>
<feature type="compositionally biased region" description="Basic and acidic residues" evidence="4">
    <location>
        <begin position="329"/>
        <end position="345"/>
    </location>
</feature>
<feature type="active site" description="Nucleophile" evidence="3">
    <location>
        <position position="1268"/>
    </location>
</feature>
<feature type="active site" description="Proton acceptor" evidence="3">
    <location>
        <position position="1386"/>
    </location>
</feature>
<feature type="binding site">
    <location>
        <begin position="692"/>
        <end position="811"/>
    </location>
    <ligand>
        <name>a nucleoside 3',5'-cyclic phosphate</name>
        <dbReference type="ChEBI" id="CHEBI:58464"/>
        <label>1</label>
    </ligand>
</feature>
<feature type="binding site">
    <location>
        <begin position="856"/>
        <end position="976"/>
    </location>
    <ligand>
        <name>a nucleoside 3',5'-cyclic phosphate</name>
        <dbReference type="ChEBI" id="CHEBI:58464"/>
        <label>2</label>
    </ligand>
</feature>
<accession>Q2UDH2</accession>
<sequence>MATDGGPLAASSASLDSSLSPLHASPSPSSTYTASSLALSAPAIAASFSVASTFSNSLIPPPPLPPPTPSTMAGWFGWVFSFFFQVIPSVLYWVITFATITLPTWLFTLFSMSLTFTMNFTTLLLIALAIVSTISWFIRYRFLNMYSRLPSEPQRKEPHLDLFPDVQEGDSKPGLANYLDEFLSAIKVFGYLERPVFHELTRTMQTRKLIAGETLMLEEEKGFCLVVDGLVQIFVKSMRDGKPNVDEGSNHMGAESSDEDDHRVDGKQGYQLLTEVKNGASMSSLFSILSLFTEDIQLRASEGSSSSASSVGPSTNARVSDSFPASPHGLEDSPRSNFVRDHGDSVAHISNSNGELLPSVPPLNLGESHAMPIQEPYPKPRSQPGKRRRKSVHPDIVARAMVDTTIAIIPASAFRRLTRVYPRATAHIVQVILTRLQRVTFATAHSYLGLNNDVLGIEKQMTKFTTQDLPNEMRGAALDRLKDKFIKERDRLGPEEIIKGIALHNPFAGRRRRSSSFLRKEAVLHAKMAAQSKRPVSMASPEDISGDRESAGPSPGDLLSTIQLSRFGPRYEHLAPKLLSPLTDKENPPFMAPVMHSSPFHRKKDAVDEDALFRESILDCIMNGIGLTSSTRDVLRKSSHTSGDISPKLLSYDSRRQKAVFTNNAFGFIDPYDSSADGETESMMSMSMTSAGGTSPIVNLREELRNDIEIVYFPQGSVLVEQGERHPGLYYVIDGFLDVGIPVSDKGEDLVGGSRPVYGQPPEEFFPTLKRTTTSSSRVSGVTSATNDTKRKRQSRKSLYLIKPGGIQGYVGSVASYRSYTDVVAKTDVYVGFLPRSSLERIAERYPIALLTLAKRLTSLLPRLLLHIDFALEWVQVSAGQVIYHQGDESDAIYLVLNGRLRSVLEGTDGKITVVGEYGQGESVGELEVMTESTRPATLHAIRDTELAKFPRSLFNSLAQEHPGITIQVSKLIAQRMRDLVELPMPEKGGEHANVGSVKTAASVVNLRTVGILPVTAGVPVVEFGHRLQNALHQIGVTNGVTSLNQAAILNHLGRHAFSKMGKLKLSQYLADLEEKYGMVLYIADTNVNSPWTQTCITQADCILLVGLAESSPSIGEYERFLLGMKTTARKELVLLHSERYCPPGLTRQWLKNRMWINGGHHHIQMGFRLTPEPSHPQAKRLGAVLKQRVQVIQAEIQKYTSRRIRQTPLYSAQTPFKGDFHRLARRLCGRSVGLVLGGGGARGIAQVGVIKALEEAGIPIDIIGGTSIGSFIGALYARDADVVPMYGRAKKFAGRMASMWRFMLDLTYPTTSYTTGHEFNRGIFKTFGDSQIEDFWLEYYCNTTNISKSRPEFHSSGYTWRYVRASMSLAGLIPPICDEGSMLLDGGYIDNLTVTHMKGLGADVIFAVDVGSIDDNTPQGYGDSLSGFWTVLNRWNPFSACPNPPTLSEIQARLAYVSSIDNLERAKNTPGCLYMRPPIDPYGTLEFGKFDEIYQVGYAYGKQYLEKLRSEGSLPLPEETEEKKKLQRTLAPRRASI</sequence>
<proteinExistence type="inferred from homology"/>
<keyword id="KW-0256">Endoplasmic reticulum</keyword>
<keyword id="KW-0378">Hydrolase</keyword>
<keyword id="KW-0442">Lipid degradation</keyword>
<keyword id="KW-0443">Lipid metabolism</keyword>
<keyword id="KW-0472">Membrane</keyword>
<keyword id="KW-1185">Reference proteome</keyword>
<keyword id="KW-0677">Repeat</keyword>
<keyword id="KW-0812">Transmembrane</keyword>
<keyword id="KW-1133">Transmembrane helix</keyword>